<dbReference type="EC" id="7.1.2.2"/>
<dbReference type="EMBL" id="AE000783">
    <property type="status" value="NOT_ANNOTATED_CDS"/>
    <property type="molecule type" value="Genomic_DNA"/>
</dbReference>
<dbReference type="PIR" id="F70111">
    <property type="entry name" value="F70111"/>
</dbReference>
<dbReference type="RefSeq" id="WP_002656082.1">
    <property type="nucleotide sequence ID" value="NC_001318.1"/>
</dbReference>
<dbReference type="RefSeq" id="YP_008686560.1">
    <property type="nucleotide sequence ID" value="NC_001318.1"/>
</dbReference>
<dbReference type="SMR" id="O51121"/>
<dbReference type="PATRIC" id="fig|224326.49.peg.492"/>
<dbReference type="OrthoDB" id="9803053at2"/>
<dbReference type="Proteomes" id="UP000001807">
    <property type="component" value="Chromosome"/>
</dbReference>
<dbReference type="GO" id="GO:0045259">
    <property type="term" value="C:proton-transporting ATP synthase complex"/>
    <property type="evidence" value="ECO:0007669"/>
    <property type="project" value="UniProtKB-ARBA"/>
</dbReference>
<dbReference type="GO" id="GO:0005524">
    <property type="term" value="F:ATP binding"/>
    <property type="evidence" value="ECO:0007669"/>
    <property type="project" value="UniProtKB-UniRule"/>
</dbReference>
<dbReference type="GO" id="GO:0046933">
    <property type="term" value="F:proton-transporting ATP synthase activity, rotational mechanism"/>
    <property type="evidence" value="ECO:0007669"/>
    <property type="project" value="UniProtKB-UniRule"/>
</dbReference>
<dbReference type="GO" id="GO:0046961">
    <property type="term" value="F:proton-transporting ATPase activity, rotational mechanism"/>
    <property type="evidence" value="ECO:0007669"/>
    <property type="project" value="InterPro"/>
</dbReference>
<dbReference type="GO" id="GO:0042777">
    <property type="term" value="P:proton motive force-driven plasma membrane ATP synthesis"/>
    <property type="evidence" value="ECO:0007669"/>
    <property type="project" value="UniProtKB-UniRule"/>
</dbReference>
<dbReference type="CDD" id="cd01426">
    <property type="entry name" value="ATP-synt_F1_V1_A1_AB_FliI_N"/>
    <property type="match status" value="1"/>
</dbReference>
<dbReference type="CDD" id="cd18111">
    <property type="entry name" value="ATP-synt_V_A-type_alpha_C"/>
    <property type="match status" value="1"/>
</dbReference>
<dbReference type="CDD" id="cd01134">
    <property type="entry name" value="V_A-ATPase_A"/>
    <property type="match status" value="1"/>
</dbReference>
<dbReference type="Gene3D" id="2.40.30.20">
    <property type="match status" value="1"/>
</dbReference>
<dbReference type="Gene3D" id="2.40.50.100">
    <property type="match status" value="1"/>
</dbReference>
<dbReference type="Gene3D" id="1.10.1140.10">
    <property type="entry name" value="Bovine Mitochondrial F1-atpase, Atp Synthase Beta Chain, Chain D, domain 3"/>
    <property type="match status" value="1"/>
</dbReference>
<dbReference type="Gene3D" id="3.40.50.300">
    <property type="entry name" value="P-loop containing nucleotide triphosphate hydrolases"/>
    <property type="match status" value="1"/>
</dbReference>
<dbReference type="HAMAP" id="MF_00309">
    <property type="entry name" value="ATP_synth_A_arch"/>
    <property type="match status" value="1"/>
</dbReference>
<dbReference type="InterPro" id="IPR055190">
    <property type="entry name" value="ATP-synt_VA_C"/>
</dbReference>
<dbReference type="InterPro" id="IPR031686">
    <property type="entry name" value="ATP-synth_a_Xtn"/>
</dbReference>
<dbReference type="InterPro" id="IPR023366">
    <property type="entry name" value="ATP_synth_asu-like_sf"/>
</dbReference>
<dbReference type="InterPro" id="IPR004100">
    <property type="entry name" value="ATPase_F1/V1/A1_a/bsu_N"/>
</dbReference>
<dbReference type="InterPro" id="IPR036121">
    <property type="entry name" value="ATPase_F1/V1/A1_a/bsu_N_sf"/>
</dbReference>
<dbReference type="InterPro" id="IPR000194">
    <property type="entry name" value="ATPase_F1/V1/A1_a/bsu_nucl-bd"/>
</dbReference>
<dbReference type="InterPro" id="IPR024034">
    <property type="entry name" value="ATPase_F1/V1_b/a_C"/>
</dbReference>
<dbReference type="InterPro" id="IPR027417">
    <property type="entry name" value="P-loop_NTPase"/>
</dbReference>
<dbReference type="InterPro" id="IPR022878">
    <property type="entry name" value="V-ATPase_asu"/>
</dbReference>
<dbReference type="NCBIfam" id="NF003220">
    <property type="entry name" value="PRK04192.1"/>
    <property type="match status" value="1"/>
</dbReference>
<dbReference type="PANTHER" id="PTHR43607:SF1">
    <property type="entry name" value="H(+)-TRANSPORTING TWO-SECTOR ATPASE"/>
    <property type="match status" value="1"/>
</dbReference>
<dbReference type="PANTHER" id="PTHR43607">
    <property type="entry name" value="V-TYPE PROTON ATPASE CATALYTIC SUBUNIT A"/>
    <property type="match status" value="1"/>
</dbReference>
<dbReference type="Pfam" id="PF00006">
    <property type="entry name" value="ATP-synt_ab"/>
    <property type="match status" value="1"/>
</dbReference>
<dbReference type="Pfam" id="PF02874">
    <property type="entry name" value="ATP-synt_ab_N"/>
    <property type="match status" value="1"/>
</dbReference>
<dbReference type="Pfam" id="PF16886">
    <property type="entry name" value="ATP-synt_ab_Xtn"/>
    <property type="match status" value="1"/>
</dbReference>
<dbReference type="Pfam" id="PF22919">
    <property type="entry name" value="ATP-synt_VA_C"/>
    <property type="match status" value="1"/>
</dbReference>
<dbReference type="SUPFAM" id="SSF50615">
    <property type="entry name" value="N-terminal domain of alpha and beta subunits of F1 ATP synthase"/>
    <property type="match status" value="1"/>
</dbReference>
<dbReference type="SUPFAM" id="SSF52540">
    <property type="entry name" value="P-loop containing nucleoside triphosphate hydrolases"/>
    <property type="match status" value="1"/>
</dbReference>
<comment type="function">
    <text evidence="1">Produces ATP from ADP in the presence of a proton gradient across the membrane. The V-type alpha chain is a catalytic subunit (By similarity).</text>
</comment>
<comment type="catalytic activity">
    <reaction>
        <text>ATP + H2O + 4 H(+)(in) = ADP + phosphate + 5 H(+)(out)</text>
        <dbReference type="Rhea" id="RHEA:57720"/>
        <dbReference type="ChEBI" id="CHEBI:15377"/>
        <dbReference type="ChEBI" id="CHEBI:15378"/>
        <dbReference type="ChEBI" id="CHEBI:30616"/>
        <dbReference type="ChEBI" id="CHEBI:43474"/>
        <dbReference type="ChEBI" id="CHEBI:456216"/>
        <dbReference type="EC" id="7.1.2.2"/>
    </reaction>
</comment>
<comment type="similarity">
    <text evidence="3">Belongs to the ATPase alpha/beta chains family.</text>
</comment>
<reference key="1">
    <citation type="journal article" date="1997" name="Nature">
        <title>Genomic sequence of a Lyme disease spirochaete, Borrelia burgdorferi.</title>
        <authorList>
            <person name="Fraser C.M."/>
            <person name="Casjens S."/>
            <person name="Huang W.M."/>
            <person name="Sutton G.G."/>
            <person name="Clayton R.A."/>
            <person name="Lathigra R."/>
            <person name="White O."/>
            <person name="Ketchum K.A."/>
            <person name="Dodson R.J."/>
            <person name="Hickey E.K."/>
            <person name="Gwinn M.L."/>
            <person name="Dougherty B.A."/>
            <person name="Tomb J.-F."/>
            <person name="Fleischmann R.D."/>
            <person name="Richardson D.L."/>
            <person name="Peterson J.D."/>
            <person name="Kerlavage A.R."/>
            <person name="Quackenbush J."/>
            <person name="Salzberg S.L."/>
            <person name="Hanson M."/>
            <person name="van Vugt R."/>
            <person name="Palmer N."/>
            <person name="Adams M.D."/>
            <person name="Gocayne J.D."/>
            <person name="Weidman J.F."/>
            <person name="Utterback T.R."/>
            <person name="Watthey L."/>
            <person name="McDonald L.A."/>
            <person name="Artiach P."/>
            <person name="Bowman C."/>
            <person name="Garland S.A."/>
            <person name="Fujii C."/>
            <person name="Cotton M.D."/>
            <person name="Horst K."/>
            <person name="Roberts K.M."/>
            <person name="Hatch B."/>
            <person name="Smith H.O."/>
            <person name="Venter J.C."/>
        </authorList>
    </citation>
    <scope>NUCLEOTIDE SEQUENCE [LARGE SCALE GENOMIC DNA]</scope>
    <source>
        <strain>ATCC 35210 / DSM 4680 / CIP 102532 / B31</strain>
    </source>
</reference>
<accession>O51121</accession>
<name>VATA_BORBU</name>
<sequence length="575" mass="64033">MNTKGKVVGVNGNLVTIEVEGSVSMNEVLFVKTAGRNLKAEVIRIRGNEVDAQVFELTKGISVGDLVEFTDKLLTVELGPGLLTQVYDGLQNPLPELAIQCGFFLERGVYLRPLNKDKKWNFKKTSKVGDIVIAGDFLGFVIEGTVHHQIMIPFYKRDSYKIVEIVSDGDYSIDEQIAVIEDDSGMRHNITMSFHWPVKVPITNYKERLIPSEPMLTQTRIIDTFFPVAKGGTFCIPGPFGAGKTVLQQVTSRNADVDVVIIAACGERAGEVVETLKEFPELMDPKTGKSLMDRTCIICNTSSMPVAAREASVYTAITIGEYYRQMGLDILLLADSTSRWAQAMREMSGRLEEIPGEEAFPAYLESVIASFYERAGIVVLNNGDIGSVTVGGSVSPAGGNFEEPVTQATLKVVGAFHGLTRERSDARKFPAISPLESWSKYKGVIDQKKTEYARSFLVKGNEINQMMKVVGEEGISNDDFLIYLKSELLDSCYLQQNSFDSIDAAVSSERQNYMFDIVYNILKTNFEFSDKLQARDFINELRQNLLDMNLSSFKDHKFNKLEHALGELINFKKVI</sequence>
<proteinExistence type="inferred from homology"/>
<keyword id="KW-0066">ATP synthesis</keyword>
<keyword id="KW-0067">ATP-binding</keyword>
<keyword id="KW-0375">Hydrogen ion transport</keyword>
<keyword id="KW-0406">Ion transport</keyword>
<keyword id="KW-0547">Nucleotide-binding</keyword>
<keyword id="KW-1185">Reference proteome</keyword>
<keyword id="KW-1278">Translocase</keyword>
<keyword id="KW-0813">Transport</keyword>
<feature type="chain" id="PRO_0000144609" description="V-type ATP synthase alpha chain">
    <location>
        <begin position="1"/>
        <end position="575"/>
    </location>
</feature>
<feature type="binding site" evidence="2">
    <location>
        <begin position="238"/>
        <end position="245"/>
    </location>
    <ligand>
        <name>ATP</name>
        <dbReference type="ChEBI" id="CHEBI:30616"/>
    </ligand>
</feature>
<organism>
    <name type="scientific">Borreliella burgdorferi (strain ATCC 35210 / DSM 4680 / CIP 102532 / B31)</name>
    <name type="common">Borrelia burgdorferi</name>
    <dbReference type="NCBI Taxonomy" id="224326"/>
    <lineage>
        <taxon>Bacteria</taxon>
        <taxon>Pseudomonadati</taxon>
        <taxon>Spirochaetota</taxon>
        <taxon>Spirochaetia</taxon>
        <taxon>Spirochaetales</taxon>
        <taxon>Borreliaceae</taxon>
        <taxon>Borreliella</taxon>
    </lineage>
</organism>
<gene>
    <name type="primary">atpA</name>
    <name type="ordered locus">BB_0094</name>
</gene>
<evidence type="ECO:0000250" key="1"/>
<evidence type="ECO:0000255" key="2"/>
<evidence type="ECO:0000305" key="3"/>
<protein>
    <recommendedName>
        <fullName>V-type ATP synthase alpha chain</fullName>
        <ecNumber>7.1.2.2</ecNumber>
    </recommendedName>
    <alternativeName>
        <fullName>V-ATPase subunit A</fullName>
    </alternativeName>
</protein>